<gene>
    <name evidence="1" type="primary">rpmI</name>
    <name type="ordered locus">SEN1709</name>
</gene>
<proteinExistence type="inferred from homology"/>
<evidence type="ECO:0000255" key="1">
    <source>
        <dbReference type="HAMAP-Rule" id="MF_00514"/>
    </source>
</evidence>
<evidence type="ECO:0000256" key="2">
    <source>
        <dbReference type="SAM" id="MobiDB-lite"/>
    </source>
</evidence>
<evidence type="ECO:0000305" key="3"/>
<dbReference type="EMBL" id="AM933172">
    <property type="protein sequence ID" value="CAR33291.1"/>
    <property type="molecule type" value="Genomic_DNA"/>
</dbReference>
<dbReference type="RefSeq" id="WP_001124225.1">
    <property type="nucleotide sequence ID" value="NC_011294.1"/>
</dbReference>
<dbReference type="SMR" id="B5QVW6"/>
<dbReference type="GeneID" id="97601348"/>
<dbReference type="KEGG" id="set:SEN1709"/>
<dbReference type="HOGENOM" id="CLU_169643_1_1_6"/>
<dbReference type="Proteomes" id="UP000000613">
    <property type="component" value="Chromosome"/>
</dbReference>
<dbReference type="GO" id="GO:0022625">
    <property type="term" value="C:cytosolic large ribosomal subunit"/>
    <property type="evidence" value="ECO:0007669"/>
    <property type="project" value="TreeGrafter"/>
</dbReference>
<dbReference type="GO" id="GO:0003735">
    <property type="term" value="F:structural constituent of ribosome"/>
    <property type="evidence" value="ECO:0007669"/>
    <property type="project" value="InterPro"/>
</dbReference>
<dbReference type="GO" id="GO:0006412">
    <property type="term" value="P:translation"/>
    <property type="evidence" value="ECO:0007669"/>
    <property type="project" value="UniProtKB-UniRule"/>
</dbReference>
<dbReference type="FunFam" id="4.10.410.60:FF:000001">
    <property type="entry name" value="50S ribosomal protein L35"/>
    <property type="match status" value="1"/>
</dbReference>
<dbReference type="Gene3D" id="4.10.410.60">
    <property type="match status" value="1"/>
</dbReference>
<dbReference type="HAMAP" id="MF_00514">
    <property type="entry name" value="Ribosomal_bL35"/>
    <property type="match status" value="1"/>
</dbReference>
<dbReference type="InterPro" id="IPR001706">
    <property type="entry name" value="Ribosomal_bL35"/>
</dbReference>
<dbReference type="InterPro" id="IPR021137">
    <property type="entry name" value="Ribosomal_bL35-like"/>
</dbReference>
<dbReference type="InterPro" id="IPR018265">
    <property type="entry name" value="Ribosomal_bL35_CS"/>
</dbReference>
<dbReference type="InterPro" id="IPR037229">
    <property type="entry name" value="Ribosomal_bL35_sf"/>
</dbReference>
<dbReference type="NCBIfam" id="TIGR00001">
    <property type="entry name" value="rpmI_bact"/>
    <property type="match status" value="1"/>
</dbReference>
<dbReference type="PANTHER" id="PTHR33343">
    <property type="entry name" value="54S RIBOSOMAL PROTEIN BL35M"/>
    <property type="match status" value="1"/>
</dbReference>
<dbReference type="PANTHER" id="PTHR33343:SF1">
    <property type="entry name" value="LARGE RIBOSOMAL SUBUNIT PROTEIN BL35M"/>
    <property type="match status" value="1"/>
</dbReference>
<dbReference type="Pfam" id="PF01632">
    <property type="entry name" value="Ribosomal_L35p"/>
    <property type="match status" value="1"/>
</dbReference>
<dbReference type="PRINTS" id="PR00064">
    <property type="entry name" value="RIBOSOMALL35"/>
</dbReference>
<dbReference type="SUPFAM" id="SSF143034">
    <property type="entry name" value="L35p-like"/>
    <property type="match status" value="1"/>
</dbReference>
<dbReference type="PROSITE" id="PS00936">
    <property type="entry name" value="RIBOSOMAL_L35"/>
    <property type="match status" value="1"/>
</dbReference>
<sequence>MPKIKTVRGAAKRFKKTGKGGFKHKHANLRHILTKKATKRKRHLRPKAMVSKGDLGLVIACLPYA</sequence>
<organism>
    <name type="scientific">Salmonella enteritidis PT4 (strain P125109)</name>
    <dbReference type="NCBI Taxonomy" id="550537"/>
    <lineage>
        <taxon>Bacteria</taxon>
        <taxon>Pseudomonadati</taxon>
        <taxon>Pseudomonadota</taxon>
        <taxon>Gammaproteobacteria</taxon>
        <taxon>Enterobacterales</taxon>
        <taxon>Enterobacteriaceae</taxon>
        <taxon>Salmonella</taxon>
    </lineage>
</organism>
<protein>
    <recommendedName>
        <fullName evidence="1">Large ribosomal subunit protein bL35</fullName>
    </recommendedName>
    <alternativeName>
        <fullName evidence="3">50S ribosomal protein L35</fullName>
    </alternativeName>
</protein>
<reference key="1">
    <citation type="journal article" date="2008" name="Genome Res.">
        <title>Comparative genome analysis of Salmonella enteritidis PT4 and Salmonella gallinarum 287/91 provides insights into evolutionary and host adaptation pathways.</title>
        <authorList>
            <person name="Thomson N.R."/>
            <person name="Clayton D.J."/>
            <person name="Windhorst D."/>
            <person name="Vernikos G."/>
            <person name="Davidson S."/>
            <person name="Churcher C."/>
            <person name="Quail M.A."/>
            <person name="Stevens M."/>
            <person name="Jones M.A."/>
            <person name="Watson M."/>
            <person name="Barron A."/>
            <person name="Layton A."/>
            <person name="Pickard D."/>
            <person name="Kingsley R.A."/>
            <person name="Bignell A."/>
            <person name="Clark L."/>
            <person name="Harris B."/>
            <person name="Ormond D."/>
            <person name="Abdellah Z."/>
            <person name="Brooks K."/>
            <person name="Cherevach I."/>
            <person name="Chillingworth T."/>
            <person name="Woodward J."/>
            <person name="Norberczak H."/>
            <person name="Lord A."/>
            <person name="Arrowsmith C."/>
            <person name="Jagels K."/>
            <person name="Moule S."/>
            <person name="Mungall K."/>
            <person name="Saunders M."/>
            <person name="Whitehead S."/>
            <person name="Chabalgoity J.A."/>
            <person name="Maskell D."/>
            <person name="Humphreys T."/>
            <person name="Roberts M."/>
            <person name="Barrow P.A."/>
            <person name="Dougan G."/>
            <person name="Parkhill J."/>
        </authorList>
    </citation>
    <scope>NUCLEOTIDE SEQUENCE [LARGE SCALE GENOMIC DNA]</scope>
    <source>
        <strain>P125109</strain>
    </source>
</reference>
<feature type="chain" id="PRO_1000127403" description="Large ribosomal subunit protein bL35">
    <location>
        <begin position="1"/>
        <end position="65"/>
    </location>
</feature>
<feature type="region of interest" description="Disordered" evidence="2">
    <location>
        <begin position="1"/>
        <end position="22"/>
    </location>
</feature>
<feature type="compositionally biased region" description="Basic residues" evidence="2">
    <location>
        <begin position="10"/>
        <end position="22"/>
    </location>
</feature>
<name>RL35_SALEP</name>
<comment type="similarity">
    <text evidence="1">Belongs to the bacterial ribosomal protein bL35 family.</text>
</comment>
<keyword id="KW-0687">Ribonucleoprotein</keyword>
<keyword id="KW-0689">Ribosomal protein</keyword>
<accession>B5QVW6</accession>